<proteinExistence type="inferred from homology"/>
<organism>
    <name type="scientific">Escherichia coli O81 (strain ED1a)</name>
    <dbReference type="NCBI Taxonomy" id="585397"/>
    <lineage>
        <taxon>Bacteria</taxon>
        <taxon>Pseudomonadati</taxon>
        <taxon>Pseudomonadota</taxon>
        <taxon>Gammaproteobacteria</taxon>
        <taxon>Enterobacterales</taxon>
        <taxon>Enterobacteriaceae</taxon>
        <taxon>Escherichia</taxon>
    </lineage>
</organism>
<gene>
    <name evidence="1" type="primary">hldD</name>
    <name type="ordered locus">ECED1_4305</name>
</gene>
<evidence type="ECO:0000255" key="1">
    <source>
        <dbReference type="HAMAP-Rule" id="MF_01601"/>
    </source>
</evidence>
<accession>B7N1S3</accession>
<feature type="chain" id="PRO_1000185789" description="ADP-L-glycero-D-manno-heptose-6-epimerase">
    <location>
        <begin position="1"/>
        <end position="310"/>
    </location>
</feature>
<feature type="active site" description="Proton acceptor" evidence="1">
    <location>
        <position position="140"/>
    </location>
</feature>
<feature type="active site" description="Proton acceptor" evidence="1">
    <location>
        <position position="178"/>
    </location>
</feature>
<feature type="binding site" evidence="1">
    <location>
        <begin position="10"/>
        <end position="11"/>
    </location>
    <ligand>
        <name>NADP(+)</name>
        <dbReference type="ChEBI" id="CHEBI:58349"/>
    </ligand>
</feature>
<feature type="binding site" evidence="1">
    <location>
        <begin position="31"/>
        <end position="32"/>
    </location>
    <ligand>
        <name>NADP(+)</name>
        <dbReference type="ChEBI" id="CHEBI:58349"/>
    </ligand>
</feature>
<feature type="binding site" evidence="1">
    <location>
        <position position="38"/>
    </location>
    <ligand>
        <name>NADP(+)</name>
        <dbReference type="ChEBI" id="CHEBI:58349"/>
    </ligand>
</feature>
<feature type="binding site" evidence="1">
    <location>
        <position position="53"/>
    </location>
    <ligand>
        <name>NADP(+)</name>
        <dbReference type="ChEBI" id="CHEBI:58349"/>
    </ligand>
</feature>
<feature type="binding site" evidence="1">
    <location>
        <begin position="75"/>
        <end position="79"/>
    </location>
    <ligand>
        <name>NADP(+)</name>
        <dbReference type="ChEBI" id="CHEBI:58349"/>
    </ligand>
</feature>
<feature type="binding site" evidence="1">
    <location>
        <position position="92"/>
    </location>
    <ligand>
        <name>NADP(+)</name>
        <dbReference type="ChEBI" id="CHEBI:58349"/>
    </ligand>
</feature>
<feature type="binding site" evidence="1">
    <location>
        <position position="144"/>
    </location>
    <ligand>
        <name>NADP(+)</name>
        <dbReference type="ChEBI" id="CHEBI:58349"/>
    </ligand>
</feature>
<feature type="binding site" evidence="1">
    <location>
        <position position="169"/>
    </location>
    <ligand>
        <name>substrate</name>
    </ligand>
</feature>
<feature type="binding site" evidence="1">
    <location>
        <position position="170"/>
    </location>
    <ligand>
        <name>NADP(+)</name>
        <dbReference type="ChEBI" id="CHEBI:58349"/>
    </ligand>
</feature>
<feature type="binding site" evidence="1">
    <location>
        <position position="178"/>
    </location>
    <ligand>
        <name>NADP(+)</name>
        <dbReference type="ChEBI" id="CHEBI:58349"/>
    </ligand>
</feature>
<feature type="binding site" evidence="1">
    <location>
        <position position="180"/>
    </location>
    <ligand>
        <name>substrate</name>
    </ligand>
</feature>
<feature type="binding site" evidence="1">
    <location>
        <position position="187"/>
    </location>
    <ligand>
        <name>substrate</name>
    </ligand>
</feature>
<feature type="binding site" evidence="1">
    <location>
        <begin position="201"/>
        <end position="204"/>
    </location>
    <ligand>
        <name>substrate</name>
    </ligand>
</feature>
<feature type="binding site" evidence="1">
    <location>
        <position position="209"/>
    </location>
    <ligand>
        <name>substrate</name>
    </ligand>
</feature>
<feature type="binding site" evidence="1">
    <location>
        <position position="272"/>
    </location>
    <ligand>
        <name>substrate</name>
    </ligand>
</feature>
<feature type="modified residue" description="N6-acetyllysine" evidence="1">
    <location>
        <position position="267"/>
    </location>
</feature>
<sequence>MIIVTGGAGFIGSNIVKALNDKGITDILVVDNLKDGTKFVNLVDLDIADYMDKEDFLIQIMAGEEFGDVEAIFHEGACSSTTEWDGKYMMDNNYQYSKELLHYCLEREIPFLYASSAATYGGRTSDFIESREYEKPLNVYGYSKFLFDEYVRQILPEANSQIVGFRYFNVYGPREGHKGSMASVAFHLNTQLNNGESPKLFEGSENFKRDFVYVGDVADVNLWFLENGVSGIFNLGTGRAESFQAVADATLAYHKKGQIEYIPFPDKLKGRYQAFTQADLTNLRAAGYDKPFKTVAEGVTEYMAWLNRDA</sequence>
<dbReference type="EC" id="5.1.3.20" evidence="1"/>
<dbReference type="EMBL" id="CU928162">
    <property type="protein sequence ID" value="CAR10293.1"/>
    <property type="molecule type" value="Genomic_DNA"/>
</dbReference>
<dbReference type="SMR" id="B7N1S3"/>
<dbReference type="KEGG" id="ecq:ECED1_4305"/>
<dbReference type="HOGENOM" id="CLU_007383_1_3_6"/>
<dbReference type="UniPathway" id="UPA00356">
    <property type="reaction ID" value="UER00440"/>
</dbReference>
<dbReference type="Proteomes" id="UP000000748">
    <property type="component" value="Chromosome"/>
</dbReference>
<dbReference type="GO" id="GO:0008712">
    <property type="term" value="F:ADP-glyceromanno-heptose 6-epimerase activity"/>
    <property type="evidence" value="ECO:0007669"/>
    <property type="project" value="UniProtKB-UniRule"/>
</dbReference>
<dbReference type="GO" id="GO:0050661">
    <property type="term" value="F:NADP binding"/>
    <property type="evidence" value="ECO:0007669"/>
    <property type="project" value="InterPro"/>
</dbReference>
<dbReference type="GO" id="GO:0097171">
    <property type="term" value="P:ADP-L-glycero-beta-D-manno-heptose biosynthetic process"/>
    <property type="evidence" value="ECO:0007669"/>
    <property type="project" value="UniProtKB-UniPathway"/>
</dbReference>
<dbReference type="GO" id="GO:0005975">
    <property type="term" value="P:carbohydrate metabolic process"/>
    <property type="evidence" value="ECO:0007669"/>
    <property type="project" value="UniProtKB-UniRule"/>
</dbReference>
<dbReference type="CDD" id="cd05248">
    <property type="entry name" value="ADP_GME_SDR_e"/>
    <property type="match status" value="1"/>
</dbReference>
<dbReference type="Gene3D" id="3.40.50.720">
    <property type="entry name" value="NAD(P)-binding Rossmann-like Domain"/>
    <property type="match status" value="1"/>
</dbReference>
<dbReference type="Gene3D" id="3.90.25.10">
    <property type="entry name" value="UDP-galactose 4-epimerase, domain 1"/>
    <property type="match status" value="1"/>
</dbReference>
<dbReference type="HAMAP" id="MF_01601">
    <property type="entry name" value="Heptose_epimerase"/>
    <property type="match status" value="1"/>
</dbReference>
<dbReference type="InterPro" id="IPR001509">
    <property type="entry name" value="Epimerase_deHydtase"/>
</dbReference>
<dbReference type="InterPro" id="IPR011912">
    <property type="entry name" value="Heptose_epim"/>
</dbReference>
<dbReference type="InterPro" id="IPR036291">
    <property type="entry name" value="NAD(P)-bd_dom_sf"/>
</dbReference>
<dbReference type="NCBIfam" id="TIGR02197">
    <property type="entry name" value="heptose_epim"/>
    <property type="match status" value="1"/>
</dbReference>
<dbReference type="NCBIfam" id="NF008360">
    <property type="entry name" value="PRK11150.1"/>
    <property type="match status" value="1"/>
</dbReference>
<dbReference type="PANTHER" id="PTHR43103:SF3">
    <property type="entry name" value="ADP-L-GLYCERO-D-MANNO-HEPTOSE-6-EPIMERASE"/>
    <property type="match status" value="1"/>
</dbReference>
<dbReference type="PANTHER" id="PTHR43103">
    <property type="entry name" value="NUCLEOSIDE-DIPHOSPHATE-SUGAR EPIMERASE"/>
    <property type="match status" value="1"/>
</dbReference>
<dbReference type="Pfam" id="PF01370">
    <property type="entry name" value="Epimerase"/>
    <property type="match status" value="1"/>
</dbReference>
<dbReference type="SUPFAM" id="SSF51735">
    <property type="entry name" value="NAD(P)-binding Rossmann-fold domains"/>
    <property type="match status" value="1"/>
</dbReference>
<protein>
    <recommendedName>
        <fullName evidence="1">ADP-L-glycero-D-manno-heptose-6-epimerase</fullName>
        <ecNumber evidence="1">5.1.3.20</ecNumber>
    </recommendedName>
    <alternativeName>
        <fullName evidence="1">ADP-L-glycero-beta-D-manno-heptose-6-epimerase</fullName>
        <shortName evidence="1">ADP-glyceromanno-heptose 6-epimerase</shortName>
        <shortName evidence="1">ADP-hep 6-epimerase</shortName>
        <shortName evidence="1">AGME</shortName>
    </alternativeName>
</protein>
<reference key="1">
    <citation type="journal article" date="2009" name="PLoS Genet.">
        <title>Organised genome dynamics in the Escherichia coli species results in highly diverse adaptive paths.</title>
        <authorList>
            <person name="Touchon M."/>
            <person name="Hoede C."/>
            <person name="Tenaillon O."/>
            <person name="Barbe V."/>
            <person name="Baeriswyl S."/>
            <person name="Bidet P."/>
            <person name="Bingen E."/>
            <person name="Bonacorsi S."/>
            <person name="Bouchier C."/>
            <person name="Bouvet O."/>
            <person name="Calteau A."/>
            <person name="Chiapello H."/>
            <person name="Clermont O."/>
            <person name="Cruveiller S."/>
            <person name="Danchin A."/>
            <person name="Diard M."/>
            <person name="Dossat C."/>
            <person name="Karoui M.E."/>
            <person name="Frapy E."/>
            <person name="Garry L."/>
            <person name="Ghigo J.M."/>
            <person name="Gilles A.M."/>
            <person name="Johnson J."/>
            <person name="Le Bouguenec C."/>
            <person name="Lescat M."/>
            <person name="Mangenot S."/>
            <person name="Martinez-Jehanne V."/>
            <person name="Matic I."/>
            <person name="Nassif X."/>
            <person name="Oztas S."/>
            <person name="Petit M.A."/>
            <person name="Pichon C."/>
            <person name="Rouy Z."/>
            <person name="Ruf C.S."/>
            <person name="Schneider D."/>
            <person name="Tourret J."/>
            <person name="Vacherie B."/>
            <person name="Vallenet D."/>
            <person name="Medigue C."/>
            <person name="Rocha E.P.C."/>
            <person name="Denamur E."/>
        </authorList>
    </citation>
    <scope>NUCLEOTIDE SEQUENCE [LARGE SCALE GENOMIC DNA]</scope>
    <source>
        <strain>ED1a</strain>
    </source>
</reference>
<name>HLDD_ECO81</name>
<keyword id="KW-0007">Acetylation</keyword>
<keyword id="KW-0119">Carbohydrate metabolism</keyword>
<keyword id="KW-0413">Isomerase</keyword>
<keyword id="KW-0521">NADP</keyword>
<comment type="function">
    <text evidence="1">Catalyzes the interconversion between ADP-D-glycero-beta-D-manno-heptose and ADP-L-glycero-beta-D-manno-heptose via an epimerization at carbon 6 of the heptose.</text>
</comment>
<comment type="catalytic activity">
    <reaction evidence="1">
        <text>ADP-D-glycero-beta-D-manno-heptose = ADP-L-glycero-beta-D-manno-heptose</text>
        <dbReference type="Rhea" id="RHEA:17577"/>
        <dbReference type="ChEBI" id="CHEBI:59967"/>
        <dbReference type="ChEBI" id="CHEBI:61506"/>
        <dbReference type="EC" id="5.1.3.20"/>
    </reaction>
</comment>
<comment type="cofactor">
    <cofactor evidence="1">
        <name>NADP(+)</name>
        <dbReference type="ChEBI" id="CHEBI:58349"/>
    </cofactor>
    <text evidence="1">Binds 1 NADP(+) per subunit.</text>
</comment>
<comment type="pathway">
    <text evidence="1">Nucleotide-sugar biosynthesis; ADP-L-glycero-beta-D-manno-heptose biosynthesis; ADP-L-glycero-beta-D-manno-heptose from D-glycero-beta-D-manno-heptose 7-phosphate: step 4/4.</text>
</comment>
<comment type="subunit">
    <text evidence="1">Homopentamer.</text>
</comment>
<comment type="domain">
    <text evidence="1">Contains a large N-terminal NADP-binding domain, and a smaller C-terminal substrate-binding domain.</text>
</comment>
<comment type="similarity">
    <text evidence="1">Belongs to the NAD(P)-dependent epimerase/dehydratase family. HldD subfamily.</text>
</comment>